<sequence length="769" mass="84987">MFNLKVKDLNGSARGLTQAFAIGELKNQLSVGALQLPLQFTRTFSASMTSELLWEVGKGNIDPVMYARLFFQYAQAGGALSVDELVNQFTEYHQSTACNPEIWRKLTAYITGSSNRAIKADAVGKVPPTAILEQLRTLAPSEHELFHHITTDFVCHVLSPLGFILPDAAYVYRVGRTATYPNFYALVDCVRASDLRRMLTALSSVDSKMLQATFKAKGALAPALISQHLANAATTAFERSRGNFDANAVVSSVLTILGRLWSPSTPKELDPSARLRNTNGIDQLRSNLALFIAYQDMVKQRGRAEVIFSDEELSSTIIPWFIEAMSEVSPFKLRPINETTSYIGQTSAIDHMGQPSHVVVYEDWQFAKEITAFTPVKLANNSNQRFLDVEPGISDRMSATLAPIGNTFAVSAFVKNRTAVYEAVSQRGTVNSNGAEMTLGFPSVVERDYALDRDPMVAIAALRTGIVDESLEARASNDLKRSMFNYYAAVMHYAVAHNPEVVVSEHQGVAAEQGSLYLVWNVRTELRIPVGYNAIEGGSIRTPEPLEAIAYNKPIQPSEVLQAKVLDLANHTTSIHIWPWHEASTEFAYEDAYSVTIRNKRYTAEVKEFELLGLGQRRERVRILKPTVAHAIIQMWYSWFVEDDRTLAAARRTSRDDAEKLAIDGRRMQNAVTLLRKIEMIGTTGIGASAVHLAQSRIVDQMAGRGLIDDSSDLHVGINRHRIRIWAGLAVLQMMGLLSRSEAEALTKVLGDSNALGMVVATTDIDPSL</sequence>
<organism>
    <name type="scientific">Pseudomonas phage phi6</name>
    <name type="common">Bacteriophage phi-6</name>
    <dbReference type="NCBI Taxonomy" id="2928686"/>
    <lineage>
        <taxon>Viruses</taxon>
        <taxon>Riboviria</taxon>
        <taxon>Orthornavirae</taxon>
        <taxon>Duplornaviricota</taxon>
        <taxon>Vidaverviricetes</taxon>
        <taxon>Mindivirales</taxon>
        <taxon>Cystoviridae</taxon>
        <taxon>Cystovirus</taxon>
        <taxon>Cystovirus phi6</taxon>
    </lineage>
</organism>
<accession>P11126</accession>
<name>P1_BPPH6</name>
<evidence type="ECO:0000269" key="1">
    <source>
    </source>
</evidence>
<evidence type="ECO:0007829" key="2">
    <source>
        <dbReference type="PDB" id="6HY0"/>
    </source>
</evidence>
<reference key="1">
    <citation type="journal article" date="1988" name="J. Virol.">
        <title>Nucleotide sequence of the large double-stranded RNA segment of bacteriophage phi 6: genes specifying the viral replicase and transcriptase.</title>
        <authorList>
            <person name="Mindich L."/>
            <person name="Nemhauser I."/>
            <person name="Gottlieb P."/>
            <person name="Romantschuk M."/>
            <person name="Carton J."/>
            <person name="Frucht S."/>
            <person name="Strassman J."/>
            <person name="Bamford D.H."/>
            <person name="Kalkkinen N."/>
        </authorList>
    </citation>
    <scope>NUCLEOTIDE SEQUENCE [GENOMIC RNA]</scope>
    <scope>PARTIAL PROTEIN SEQUENCE</scope>
</reference>
<reference key="2">
    <citation type="journal article" date="2003" name="J. Bacteriol.">
        <title>Analysis of specific binding involved in genomic packaging of the double-stranded-RNA bacteriophage phi6.</title>
        <authorList>
            <person name="Qiao X."/>
            <person name="Qiao J."/>
            <person name="Mindich L."/>
        </authorList>
    </citation>
    <scope>FUNCTION</scope>
    <scope>RNA-BINDING</scope>
</reference>
<reference key="3">
    <citation type="journal article" date="2007" name="Structure">
        <title>Electron cryomicroscopy comparison of the architectures of the enveloped bacteriophages phi6 and phi8.</title>
        <authorList>
            <person name="Jaalinoja H.T."/>
            <person name="Huiskonen J.T."/>
            <person name="Butcher S.J."/>
        </authorList>
    </citation>
    <scope>STRUCTURE BY ELECTRON MICROSCOPY (14.0 ANGSTROMS)</scope>
</reference>
<organismHost>
    <name type="scientific">Pseudomonas savastanoi pv. phaseolicola</name>
    <name type="common">Pseudomonas syringae pv. phaseolicola</name>
    <dbReference type="NCBI Taxonomy" id="319"/>
</organismHost>
<feature type="chain" id="PRO_0000164637" description="Major inner protein P1">
    <location>
        <begin position="1"/>
        <end position="769"/>
    </location>
</feature>
<feature type="strand" evidence="2">
    <location>
        <begin position="2"/>
        <end position="7"/>
    </location>
</feature>
<feature type="helix" evidence="2">
    <location>
        <begin position="9"/>
        <end position="12"/>
    </location>
</feature>
<feature type="helix" evidence="2">
    <location>
        <begin position="18"/>
        <end position="22"/>
    </location>
</feature>
<feature type="strand" evidence="2">
    <location>
        <begin position="35"/>
        <end position="38"/>
    </location>
</feature>
<feature type="strand" evidence="2">
    <location>
        <begin position="42"/>
        <end position="46"/>
    </location>
</feature>
<feature type="strand" evidence="2">
    <location>
        <begin position="53"/>
        <end position="55"/>
    </location>
</feature>
<feature type="strand" evidence="2">
    <location>
        <begin position="57"/>
        <end position="59"/>
    </location>
</feature>
<feature type="helix" evidence="2">
    <location>
        <begin position="63"/>
        <end position="76"/>
    </location>
</feature>
<feature type="helix" evidence="2">
    <location>
        <begin position="82"/>
        <end position="95"/>
    </location>
</feature>
<feature type="turn" evidence="2">
    <location>
        <begin position="96"/>
        <end position="98"/>
    </location>
</feature>
<feature type="helix" evidence="2">
    <location>
        <begin position="100"/>
        <end position="110"/>
    </location>
</feature>
<feature type="turn" evidence="2">
    <location>
        <begin position="119"/>
        <end position="121"/>
    </location>
</feature>
<feature type="helix" evidence="2">
    <location>
        <begin position="128"/>
        <end position="138"/>
    </location>
</feature>
<feature type="helix" evidence="2">
    <location>
        <begin position="144"/>
        <end position="157"/>
    </location>
</feature>
<feature type="turn" evidence="2">
    <location>
        <begin position="158"/>
        <end position="162"/>
    </location>
</feature>
<feature type="strand" evidence="2">
    <location>
        <begin position="170"/>
        <end position="173"/>
    </location>
</feature>
<feature type="helix" evidence="2">
    <location>
        <begin position="183"/>
        <end position="201"/>
    </location>
</feature>
<feature type="helix" evidence="2">
    <location>
        <begin position="205"/>
        <end position="213"/>
    </location>
</feature>
<feature type="strand" evidence="2">
    <location>
        <begin position="215"/>
        <end position="217"/>
    </location>
</feature>
<feature type="helix" evidence="2">
    <location>
        <begin position="222"/>
        <end position="239"/>
    </location>
</feature>
<feature type="helix" evidence="2">
    <location>
        <begin position="246"/>
        <end position="261"/>
    </location>
</feature>
<feature type="helix" evidence="2">
    <location>
        <begin position="267"/>
        <end position="269"/>
    </location>
</feature>
<feature type="helix" evidence="2">
    <location>
        <begin position="271"/>
        <end position="274"/>
    </location>
</feature>
<feature type="helix" evidence="2">
    <location>
        <begin position="279"/>
        <end position="284"/>
    </location>
</feature>
<feature type="helix" evidence="2">
    <location>
        <begin position="288"/>
        <end position="301"/>
    </location>
</feature>
<feature type="strand" evidence="2">
    <location>
        <begin position="310"/>
        <end position="312"/>
    </location>
</feature>
<feature type="helix" evidence="2">
    <location>
        <begin position="314"/>
        <end position="326"/>
    </location>
</feature>
<feature type="strand" evidence="2">
    <location>
        <begin position="330"/>
        <end position="334"/>
    </location>
</feature>
<feature type="helix" evidence="2">
    <location>
        <begin position="336"/>
        <end position="338"/>
    </location>
</feature>
<feature type="strand" evidence="2">
    <location>
        <begin position="339"/>
        <end position="349"/>
    </location>
</feature>
<feature type="strand" evidence="2">
    <location>
        <begin position="351"/>
        <end position="353"/>
    </location>
</feature>
<feature type="strand" evidence="2">
    <location>
        <begin position="355"/>
        <end position="362"/>
    </location>
</feature>
<feature type="strand" evidence="2">
    <location>
        <begin position="372"/>
        <end position="376"/>
    </location>
</feature>
<feature type="strand" evidence="2">
    <location>
        <begin position="378"/>
        <end position="381"/>
    </location>
</feature>
<feature type="strand" evidence="2">
    <location>
        <begin position="386"/>
        <end position="389"/>
    </location>
</feature>
<feature type="helix" evidence="2">
    <location>
        <begin position="393"/>
        <end position="407"/>
    </location>
</feature>
<feature type="helix" evidence="2">
    <location>
        <begin position="410"/>
        <end position="412"/>
    </location>
</feature>
<feature type="helix" evidence="2">
    <location>
        <begin position="414"/>
        <end position="423"/>
    </location>
</feature>
<feature type="turn" evidence="2">
    <location>
        <begin position="429"/>
        <end position="433"/>
    </location>
</feature>
<feature type="strand" evidence="2">
    <location>
        <begin position="436"/>
        <end position="440"/>
    </location>
</feature>
<feature type="helix" evidence="2">
    <location>
        <begin position="442"/>
        <end position="450"/>
    </location>
</feature>
<feature type="turn" evidence="2">
    <location>
        <begin position="455"/>
        <end position="457"/>
    </location>
</feature>
<feature type="helix" evidence="2">
    <location>
        <begin position="458"/>
        <end position="464"/>
    </location>
</feature>
<feature type="helix" evidence="2">
    <location>
        <begin position="473"/>
        <end position="497"/>
    </location>
</feature>
<feature type="strand" evidence="2">
    <location>
        <begin position="501"/>
        <end position="506"/>
    </location>
</feature>
<feature type="strand" evidence="2">
    <location>
        <begin position="509"/>
        <end position="511"/>
    </location>
</feature>
<feature type="strand" evidence="2">
    <location>
        <begin position="515"/>
        <end position="523"/>
    </location>
</feature>
<feature type="strand" evidence="2">
    <location>
        <begin position="530"/>
        <end position="533"/>
    </location>
</feature>
<feature type="turn" evidence="2">
    <location>
        <begin position="536"/>
        <end position="538"/>
    </location>
</feature>
<feature type="strand" evidence="2">
    <location>
        <begin position="539"/>
        <end position="544"/>
    </location>
</feature>
<feature type="helix" evidence="2">
    <location>
        <begin position="547"/>
        <end position="550"/>
    </location>
</feature>
<feature type="helix" evidence="2">
    <location>
        <begin position="568"/>
        <end position="571"/>
    </location>
</feature>
<feature type="strand" evidence="2">
    <location>
        <begin position="584"/>
        <end position="586"/>
    </location>
</feature>
<feature type="strand" evidence="2">
    <location>
        <begin position="591"/>
        <end position="597"/>
    </location>
</feature>
<feature type="strand" evidence="2">
    <location>
        <begin position="600"/>
        <end position="606"/>
    </location>
</feature>
<feature type="turn" evidence="2">
    <location>
        <begin position="610"/>
        <end position="613"/>
    </location>
</feature>
<feature type="strand" evidence="2">
    <location>
        <begin position="622"/>
        <end position="624"/>
    </location>
</feature>
<feature type="helix" evidence="2">
    <location>
        <begin position="627"/>
        <end position="651"/>
    </location>
</feature>
<feature type="helix" evidence="2">
    <location>
        <begin position="657"/>
        <end position="682"/>
    </location>
</feature>
<feature type="helix" evidence="2">
    <location>
        <begin position="685"/>
        <end position="705"/>
    </location>
</feature>
<feature type="helix" evidence="2">
    <location>
        <begin position="710"/>
        <end position="713"/>
    </location>
</feature>
<feature type="turn" evidence="2">
    <location>
        <begin position="717"/>
        <end position="720"/>
    </location>
</feature>
<feature type="helix" evidence="2">
    <location>
        <begin position="721"/>
        <end position="734"/>
    </location>
</feature>
<feature type="strand" evidence="2">
    <location>
        <begin position="735"/>
        <end position="737"/>
    </location>
</feature>
<feature type="helix" evidence="2">
    <location>
        <begin position="740"/>
        <end position="753"/>
    </location>
</feature>
<feature type="strand" evidence="2">
    <location>
        <begin position="756"/>
        <end position="758"/>
    </location>
</feature>
<proteinExistence type="evidence at protein level"/>
<gene>
    <name type="primary">P1</name>
</gene>
<dbReference type="EMBL" id="M17461">
    <property type="protein sequence ID" value="AAA32357.1"/>
    <property type="molecule type" value="Genomic_RNA"/>
</dbReference>
<dbReference type="PIR" id="D29885">
    <property type="entry name" value="P1BPF6"/>
</dbReference>
<dbReference type="RefSeq" id="NP_620348.1">
    <property type="nucleotide sequence ID" value="NC_003715.1"/>
</dbReference>
<dbReference type="PDB" id="4BTG">
    <property type="method" value="EM"/>
    <property type="resolution" value="4.40 A"/>
    <property type="chains" value="A/B=2-761"/>
</dbReference>
<dbReference type="PDB" id="4BTQ">
    <property type="method" value="EM"/>
    <property type="resolution" value="7.50 A"/>
    <property type="chains" value="A/B=2-761"/>
</dbReference>
<dbReference type="PDB" id="4K7H">
    <property type="method" value="X-ray"/>
    <property type="resolution" value="3.60 A"/>
    <property type="chains" value="A/B/C/D/E=2-769"/>
</dbReference>
<dbReference type="PDB" id="5FJ5">
    <property type="method" value="EM"/>
    <property type="resolution" value="4.80 A"/>
    <property type="chains" value="A/B=2-761"/>
</dbReference>
<dbReference type="PDB" id="5FJ7">
    <property type="method" value="EM"/>
    <property type="resolution" value="7.90 A"/>
    <property type="chains" value="A/B=2-761"/>
</dbReference>
<dbReference type="PDB" id="5MUU">
    <property type="method" value="EM"/>
    <property type="resolution" value="4.00 A"/>
    <property type="chains" value="A/B=1-769"/>
</dbReference>
<dbReference type="PDB" id="6HY0">
    <property type="method" value="EM"/>
    <property type="resolution" value="3.50 A"/>
    <property type="chains" value="A/B=1-769"/>
</dbReference>
<dbReference type="PDBsum" id="4BTG"/>
<dbReference type="PDBsum" id="4BTQ"/>
<dbReference type="PDBsum" id="4K7H"/>
<dbReference type="PDBsum" id="5FJ5"/>
<dbReference type="PDBsum" id="5FJ7"/>
<dbReference type="PDBsum" id="5MUU"/>
<dbReference type="PDBsum" id="6HY0"/>
<dbReference type="EMDB" id="EMD-0299"/>
<dbReference type="EMDB" id="EMD-3185"/>
<dbReference type="EMDB" id="EMD-3186"/>
<dbReference type="EMDB" id="EMD-3187"/>
<dbReference type="EMDB" id="EMD-3571"/>
<dbReference type="SMR" id="P11126"/>
<dbReference type="DIP" id="DIP-29115N"/>
<dbReference type="IntAct" id="P11126">
    <property type="interactions" value="2"/>
</dbReference>
<dbReference type="KEGG" id="vg:956438"/>
<dbReference type="EvolutionaryTrace" id="P11126"/>
<dbReference type="Proteomes" id="UP000002610">
    <property type="component" value="Genome"/>
</dbReference>
<dbReference type="GO" id="GO:0039616">
    <property type="term" value="C:T=2 icosahedral viral capsid"/>
    <property type="evidence" value="ECO:0007669"/>
    <property type="project" value="UniProtKB-KW"/>
</dbReference>
<dbReference type="GO" id="GO:0039625">
    <property type="term" value="C:viral inner capsid"/>
    <property type="evidence" value="ECO:0007669"/>
    <property type="project" value="UniProtKB-KW"/>
</dbReference>
<dbReference type="GO" id="GO:0019013">
    <property type="term" value="C:viral nucleocapsid"/>
    <property type="evidence" value="ECO:0007669"/>
    <property type="project" value="UniProtKB-KW"/>
</dbReference>
<dbReference type="GO" id="GO:0042802">
    <property type="term" value="F:identical protein binding"/>
    <property type="evidence" value="ECO:0000353"/>
    <property type="project" value="IntAct"/>
</dbReference>
<dbReference type="GO" id="GO:0003723">
    <property type="term" value="F:RNA binding"/>
    <property type="evidence" value="ECO:0007669"/>
    <property type="project" value="UniProtKB-KW"/>
</dbReference>
<dbReference type="InterPro" id="IPR048856">
    <property type="entry name" value="P1"/>
</dbReference>
<dbReference type="Pfam" id="PF20837">
    <property type="entry name" value="P1"/>
    <property type="match status" value="1"/>
</dbReference>
<keyword id="KW-0002">3D-structure</keyword>
<keyword id="KW-0167">Capsid protein</keyword>
<keyword id="KW-0903">Direct protein sequencing</keyword>
<keyword id="KW-1153">Inner capsid protein</keyword>
<keyword id="KW-1185">Reference proteome</keyword>
<keyword id="KW-0694">RNA-binding</keyword>
<keyword id="KW-1141">T=2 icosahedral capsid protein</keyword>
<keyword id="KW-0804">Transcription</keyword>
<keyword id="KW-0543">Viral nucleoprotein</keyword>
<keyword id="KW-0946">Virion</keyword>
<protein>
    <recommendedName>
        <fullName>Major inner protein P1</fullName>
    </recommendedName>
</protein>
<comment type="function">
    <text evidence="1">P1 is the major inner capsid (core) protein of the polyhedral procapsid, which is responsible for genomic replication and transcription. Forms a dodecahedral shell from 60 asymmetric dimers. Binds to RNA and may be involved in genomic packaging.</text>
</comment>
<comment type="subunit">
    <text>Homodimer. Associates with the polymerase complex.</text>
</comment>
<comment type="interaction">
    <interactant intactId="EBI-15586148">
        <id>P11126</id>
    </interactant>
    <interactant intactId="EBI-15586148">
        <id>P11126</id>
        <label>P1</label>
    </interactant>
    <organismsDiffer>false</organismsDiffer>
    <experiments>4</experiments>
</comment>
<comment type="subcellular location">
    <subcellularLocation>
        <location>Virion</location>
    </subcellularLocation>
    <text>Inner capsid protein (120 copies).</text>
</comment>